<feature type="chain" id="PRO_0000289393" description="Lipoprotein signal peptidase">
    <location>
        <begin position="1"/>
        <end position="154"/>
    </location>
</feature>
<feature type="transmembrane region" description="Helical" evidence="1">
    <location>
        <begin position="8"/>
        <end position="28"/>
    </location>
</feature>
<feature type="transmembrane region" description="Helical" evidence="1">
    <location>
        <begin position="58"/>
        <end position="78"/>
    </location>
</feature>
<feature type="transmembrane region" description="Helical" evidence="1">
    <location>
        <begin position="88"/>
        <end position="108"/>
    </location>
</feature>
<feature type="transmembrane region" description="Helical" evidence="1">
    <location>
        <begin position="131"/>
        <end position="151"/>
    </location>
</feature>
<feature type="active site" evidence="1">
    <location>
        <position position="117"/>
    </location>
</feature>
<feature type="active site" evidence="1">
    <location>
        <position position="133"/>
    </location>
</feature>
<protein>
    <recommendedName>
        <fullName evidence="1">Lipoprotein signal peptidase</fullName>
        <ecNumber evidence="1">3.4.23.36</ecNumber>
    </recommendedName>
    <alternativeName>
        <fullName evidence="1">Prolipoprotein signal peptidase</fullName>
    </alternativeName>
    <alternativeName>
        <fullName evidence="1">Signal peptidase II</fullName>
        <shortName evidence="1">SPase II</shortName>
    </alternativeName>
</protein>
<evidence type="ECO:0000255" key="1">
    <source>
        <dbReference type="HAMAP-Rule" id="MF_00161"/>
    </source>
</evidence>
<dbReference type="EC" id="3.4.23.36" evidence="1"/>
<dbReference type="EMBL" id="AE017198">
    <property type="protein sequence ID" value="AAS09008.1"/>
    <property type="molecule type" value="Genomic_DNA"/>
</dbReference>
<dbReference type="RefSeq" id="WP_011162019.1">
    <property type="nucleotide sequence ID" value="NC_005362.1"/>
</dbReference>
<dbReference type="SMR" id="Q74JC2"/>
<dbReference type="GeneID" id="83570377"/>
<dbReference type="KEGG" id="ljo:LJ_1187"/>
<dbReference type="eggNOG" id="COG0597">
    <property type="taxonomic scope" value="Bacteria"/>
</dbReference>
<dbReference type="HOGENOM" id="CLU_083252_3_3_9"/>
<dbReference type="UniPathway" id="UPA00665"/>
<dbReference type="Proteomes" id="UP000000581">
    <property type="component" value="Chromosome"/>
</dbReference>
<dbReference type="GO" id="GO:0005886">
    <property type="term" value="C:plasma membrane"/>
    <property type="evidence" value="ECO:0007669"/>
    <property type="project" value="UniProtKB-SubCell"/>
</dbReference>
<dbReference type="GO" id="GO:0004190">
    <property type="term" value="F:aspartic-type endopeptidase activity"/>
    <property type="evidence" value="ECO:0007669"/>
    <property type="project" value="UniProtKB-UniRule"/>
</dbReference>
<dbReference type="GO" id="GO:0006508">
    <property type="term" value="P:proteolysis"/>
    <property type="evidence" value="ECO:0007669"/>
    <property type="project" value="UniProtKB-KW"/>
</dbReference>
<dbReference type="HAMAP" id="MF_00161">
    <property type="entry name" value="LspA"/>
    <property type="match status" value="1"/>
</dbReference>
<dbReference type="InterPro" id="IPR001872">
    <property type="entry name" value="Peptidase_A8"/>
</dbReference>
<dbReference type="NCBIfam" id="TIGR00077">
    <property type="entry name" value="lspA"/>
    <property type="match status" value="1"/>
</dbReference>
<dbReference type="PANTHER" id="PTHR33695">
    <property type="entry name" value="LIPOPROTEIN SIGNAL PEPTIDASE"/>
    <property type="match status" value="1"/>
</dbReference>
<dbReference type="PANTHER" id="PTHR33695:SF1">
    <property type="entry name" value="LIPOPROTEIN SIGNAL PEPTIDASE"/>
    <property type="match status" value="1"/>
</dbReference>
<dbReference type="Pfam" id="PF01252">
    <property type="entry name" value="Peptidase_A8"/>
    <property type="match status" value="1"/>
</dbReference>
<dbReference type="PRINTS" id="PR00781">
    <property type="entry name" value="LIPOSIGPTASE"/>
</dbReference>
<keyword id="KW-0064">Aspartyl protease</keyword>
<keyword id="KW-1003">Cell membrane</keyword>
<keyword id="KW-0378">Hydrolase</keyword>
<keyword id="KW-0472">Membrane</keyword>
<keyword id="KW-0645">Protease</keyword>
<keyword id="KW-0812">Transmembrane</keyword>
<keyword id="KW-1133">Transmembrane helix</keyword>
<proteinExistence type="inferred from homology"/>
<sequence length="154" mass="17341">MSKAKQALYLIVSLLVIIADQLLKNYIVTNFKIGDEKTIIPGVLSFTYLQNDGAAWNIFSGQMILFYLISIAAIAVVIYYLFNPKYKNGLFDTGLALVLGGIIGNFIDRLHLKYVIDMLQLDFIQFNIFNIADSAITVGIILVFIYLIFISEKD</sequence>
<accession>Q74JC2</accession>
<organism>
    <name type="scientific">Lactobacillus johnsonii (strain CNCM I-12250 / La1 / NCC 533)</name>
    <dbReference type="NCBI Taxonomy" id="257314"/>
    <lineage>
        <taxon>Bacteria</taxon>
        <taxon>Bacillati</taxon>
        <taxon>Bacillota</taxon>
        <taxon>Bacilli</taxon>
        <taxon>Lactobacillales</taxon>
        <taxon>Lactobacillaceae</taxon>
        <taxon>Lactobacillus</taxon>
    </lineage>
</organism>
<reference key="1">
    <citation type="journal article" date="2004" name="Proc. Natl. Acad. Sci. U.S.A.">
        <title>The genome sequence of the probiotic intestinal bacterium Lactobacillus johnsonii NCC 533.</title>
        <authorList>
            <person name="Pridmore R.D."/>
            <person name="Berger B."/>
            <person name="Desiere F."/>
            <person name="Vilanova D."/>
            <person name="Barretto C."/>
            <person name="Pittet A.-C."/>
            <person name="Zwahlen M.-C."/>
            <person name="Rouvet M."/>
            <person name="Altermann E."/>
            <person name="Barrangou R."/>
            <person name="Mollet B."/>
            <person name="Mercenier A."/>
            <person name="Klaenhammer T."/>
            <person name="Arigoni F."/>
            <person name="Schell M.A."/>
        </authorList>
    </citation>
    <scope>NUCLEOTIDE SEQUENCE [LARGE SCALE GENOMIC DNA]</scope>
    <source>
        <strain>CNCM I-1225 / La1 / NCC 533</strain>
    </source>
</reference>
<name>LSPA_LACJO</name>
<gene>
    <name evidence="1" type="primary">lspA</name>
    <name type="ordered locus">LJ_1187</name>
</gene>
<comment type="function">
    <text evidence="1">This protein specifically catalyzes the removal of signal peptides from prolipoproteins.</text>
</comment>
<comment type="catalytic activity">
    <reaction evidence="1">
        <text>Release of signal peptides from bacterial membrane prolipoproteins. Hydrolyzes -Xaa-Yaa-Zaa-|-(S,diacylglyceryl)Cys-, in which Xaa is hydrophobic (preferably Leu), and Yaa (Ala or Ser) and Zaa (Gly or Ala) have small, neutral side chains.</text>
        <dbReference type="EC" id="3.4.23.36"/>
    </reaction>
</comment>
<comment type="pathway">
    <text evidence="1">Protein modification; lipoprotein biosynthesis (signal peptide cleavage).</text>
</comment>
<comment type="subcellular location">
    <subcellularLocation>
        <location evidence="1">Cell membrane</location>
        <topology evidence="1">Multi-pass membrane protein</topology>
    </subcellularLocation>
</comment>
<comment type="similarity">
    <text evidence="1">Belongs to the peptidase A8 family.</text>
</comment>